<proteinExistence type="inferred from homology"/>
<name>FUMC_PASMU</name>
<organism>
    <name type="scientific">Pasteurella multocida (strain Pm70)</name>
    <dbReference type="NCBI Taxonomy" id="272843"/>
    <lineage>
        <taxon>Bacteria</taxon>
        <taxon>Pseudomonadati</taxon>
        <taxon>Pseudomonadota</taxon>
        <taxon>Gammaproteobacteria</taxon>
        <taxon>Pasteurellales</taxon>
        <taxon>Pasteurellaceae</taxon>
        <taxon>Pasteurella</taxon>
    </lineage>
</organism>
<sequence>MTFRIEKDTMGEVQVPADKYWAAQTERSRNNFKIGPEASMPKEIIEAFGYLKKAAAYANHDLGVLPVEKRDLIAQACDEILANKLDDQFPLVIWQTGSGTQSNMNLNEVISNRAHVLNGGKLGEKSIIHPNDDVNKSQSSNDTYPTAMHIAAYKKVVEVTIPCVERLQKTLAQKADAFKDVVKIGRTHLMDATPLTLGQEFSAYAAQLDFGLRALKNTLPHLAQLALGGTAVGTGLNTPKGYDVKVADYIAKFTGLPFITAENKFEALATHDAVVETHGALKQLAVSLYKIANDIRLLASGPRSGIGEILIPENEPGSSIMPGKVNPTQCEAMTMVCAQVLGNDTTISFAGTQGHFQLNVFKPVMAANFLQSAQLLADACVSFDEHCAVGIEPNFPRIKKQLDDSLMLVTALNTHIGYENAAKIAKTAHKNGTTLKEEAINLGLVTAEQFDEWVRPEDMVGSLK</sequence>
<protein>
    <recommendedName>
        <fullName evidence="1">Fumarate hydratase class II</fullName>
        <shortName evidence="1">Fumarase C</shortName>
        <ecNumber evidence="1">4.2.1.2</ecNumber>
    </recommendedName>
    <alternativeName>
        <fullName evidence="1">Aerobic fumarase</fullName>
    </alternativeName>
    <alternativeName>
        <fullName evidence="1">Iron-independent fumarase</fullName>
    </alternativeName>
</protein>
<gene>
    <name evidence="1" type="primary">fumC</name>
    <name type="ordered locus">PM0823</name>
</gene>
<accession>Q9CMK1</accession>
<reference key="1">
    <citation type="journal article" date="2001" name="Proc. Natl. Acad. Sci. U.S.A.">
        <title>Complete genomic sequence of Pasteurella multocida Pm70.</title>
        <authorList>
            <person name="May B.J."/>
            <person name="Zhang Q."/>
            <person name="Li L.L."/>
            <person name="Paustian M.L."/>
            <person name="Whittam T.S."/>
            <person name="Kapur V."/>
        </authorList>
    </citation>
    <scope>NUCLEOTIDE SEQUENCE [LARGE SCALE GENOMIC DNA]</scope>
    <source>
        <strain>Pm70</strain>
    </source>
</reference>
<feature type="chain" id="PRO_0000161294" description="Fumarate hydratase class II">
    <location>
        <begin position="1"/>
        <end position="464"/>
    </location>
</feature>
<feature type="active site" description="Proton donor/acceptor" evidence="1">
    <location>
        <position position="188"/>
    </location>
</feature>
<feature type="active site" evidence="1">
    <location>
        <position position="318"/>
    </location>
</feature>
<feature type="binding site" evidence="1">
    <location>
        <begin position="98"/>
        <end position="100"/>
    </location>
    <ligand>
        <name>substrate</name>
    </ligand>
</feature>
<feature type="binding site" description="in site B" evidence="1">
    <location>
        <begin position="129"/>
        <end position="132"/>
    </location>
    <ligand>
        <name>substrate</name>
    </ligand>
</feature>
<feature type="binding site" evidence="1">
    <location>
        <begin position="139"/>
        <end position="141"/>
    </location>
    <ligand>
        <name>substrate</name>
    </ligand>
</feature>
<feature type="binding site" evidence="1">
    <location>
        <position position="187"/>
    </location>
    <ligand>
        <name>substrate</name>
    </ligand>
</feature>
<feature type="binding site" evidence="1">
    <location>
        <position position="319"/>
    </location>
    <ligand>
        <name>substrate</name>
    </ligand>
</feature>
<feature type="binding site" evidence="1">
    <location>
        <begin position="324"/>
        <end position="326"/>
    </location>
    <ligand>
        <name>substrate</name>
    </ligand>
</feature>
<feature type="site" description="Important for catalytic activity" evidence="1">
    <location>
        <position position="331"/>
    </location>
</feature>
<evidence type="ECO:0000255" key="1">
    <source>
        <dbReference type="HAMAP-Rule" id="MF_00743"/>
    </source>
</evidence>
<dbReference type="EC" id="4.2.1.2" evidence="1"/>
<dbReference type="EMBL" id="AE004439">
    <property type="protein sequence ID" value="AAK02907.1"/>
    <property type="molecule type" value="Genomic_DNA"/>
</dbReference>
<dbReference type="RefSeq" id="WP_005722516.1">
    <property type="nucleotide sequence ID" value="NC_002663.1"/>
</dbReference>
<dbReference type="SMR" id="Q9CMK1"/>
<dbReference type="STRING" id="272843.PM0823"/>
<dbReference type="EnsemblBacteria" id="AAK02907">
    <property type="protein sequence ID" value="AAK02907"/>
    <property type="gene ID" value="PM0823"/>
</dbReference>
<dbReference type="GeneID" id="77207750"/>
<dbReference type="KEGG" id="pmu:PM0823"/>
<dbReference type="HOGENOM" id="CLU_021594_4_1_6"/>
<dbReference type="OrthoDB" id="9802809at2"/>
<dbReference type="UniPathway" id="UPA00223">
    <property type="reaction ID" value="UER01007"/>
</dbReference>
<dbReference type="Proteomes" id="UP000000809">
    <property type="component" value="Chromosome"/>
</dbReference>
<dbReference type="GO" id="GO:0005737">
    <property type="term" value="C:cytoplasm"/>
    <property type="evidence" value="ECO:0007669"/>
    <property type="project" value="UniProtKB-SubCell"/>
</dbReference>
<dbReference type="GO" id="GO:0004333">
    <property type="term" value="F:fumarate hydratase activity"/>
    <property type="evidence" value="ECO:0007669"/>
    <property type="project" value="UniProtKB-UniRule"/>
</dbReference>
<dbReference type="GO" id="GO:0006106">
    <property type="term" value="P:fumarate metabolic process"/>
    <property type="evidence" value="ECO:0007669"/>
    <property type="project" value="InterPro"/>
</dbReference>
<dbReference type="GO" id="GO:0006108">
    <property type="term" value="P:malate metabolic process"/>
    <property type="evidence" value="ECO:0007669"/>
    <property type="project" value="TreeGrafter"/>
</dbReference>
<dbReference type="GO" id="GO:0006099">
    <property type="term" value="P:tricarboxylic acid cycle"/>
    <property type="evidence" value="ECO:0007669"/>
    <property type="project" value="UniProtKB-UniRule"/>
</dbReference>
<dbReference type="CDD" id="cd01362">
    <property type="entry name" value="Fumarase_classII"/>
    <property type="match status" value="1"/>
</dbReference>
<dbReference type="FunFam" id="1.10.40.30:FF:000002">
    <property type="entry name" value="Fumarate hydratase class II"/>
    <property type="match status" value="1"/>
</dbReference>
<dbReference type="FunFam" id="1.10.275.10:FF:000001">
    <property type="entry name" value="Fumarate hydratase, mitochondrial"/>
    <property type="match status" value="1"/>
</dbReference>
<dbReference type="FunFam" id="1.20.200.10:FF:000001">
    <property type="entry name" value="Fumarate hydratase, mitochondrial"/>
    <property type="match status" value="1"/>
</dbReference>
<dbReference type="Gene3D" id="1.10.40.30">
    <property type="entry name" value="Fumarase/aspartase (C-terminal domain)"/>
    <property type="match status" value="1"/>
</dbReference>
<dbReference type="Gene3D" id="1.20.200.10">
    <property type="entry name" value="Fumarase/aspartase (Central domain)"/>
    <property type="match status" value="1"/>
</dbReference>
<dbReference type="Gene3D" id="1.10.275.10">
    <property type="entry name" value="Fumarase/aspartase (N-terminal domain)"/>
    <property type="match status" value="1"/>
</dbReference>
<dbReference type="HAMAP" id="MF_00743">
    <property type="entry name" value="FumaraseC"/>
    <property type="match status" value="1"/>
</dbReference>
<dbReference type="InterPro" id="IPR005677">
    <property type="entry name" value="Fum_hydII"/>
</dbReference>
<dbReference type="InterPro" id="IPR024083">
    <property type="entry name" value="Fumarase/histidase_N"/>
</dbReference>
<dbReference type="InterPro" id="IPR018951">
    <property type="entry name" value="Fumarase_C_C"/>
</dbReference>
<dbReference type="InterPro" id="IPR020557">
    <property type="entry name" value="Fumarate_lyase_CS"/>
</dbReference>
<dbReference type="InterPro" id="IPR000362">
    <property type="entry name" value="Fumarate_lyase_fam"/>
</dbReference>
<dbReference type="InterPro" id="IPR022761">
    <property type="entry name" value="Fumarate_lyase_N"/>
</dbReference>
<dbReference type="InterPro" id="IPR008948">
    <property type="entry name" value="L-Aspartase-like"/>
</dbReference>
<dbReference type="NCBIfam" id="TIGR00979">
    <property type="entry name" value="fumC_II"/>
    <property type="match status" value="1"/>
</dbReference>
<dbReference type="NCBIfam" id="NF008909">
    <property type="entry name" value="PRK12273.1"/>
    <property type="match status" value="1"/>
</dbReference>
<dbReference type="PANTHER" id="PTHR11444">
    <property type="entry name" value="ASPARTATEAMMONIA/ARGININOSUCCINATE/ADENYLOSUCCINATE LYASE"/>
    <property type="match status" value="1"/>
</dbReference>
<dbReference type="PANTHER" id="PTHR11444:SF1">
    <property type="entry name" value="FUMARATE HYDRATASE, MITOCHONDRIAL"/>
    <property type="match status" value="1"/>
</dbReference>
<dbReference type="Pfam" id="PF10415">
    <property type="entry name" value="FumaraseC_C"/>
    <property type="match status" value="1"/>
</dbReference>
<dbReference type="Pfam" id="PF00206">
    <property type="entry name" value="Lyase_1"/>
    <property type="match status" value="1"/>
</dbReference>
<dbReference type="PRINTS" id="PR00149">
    <property type="entry name" value="FUMRATELYASE"/>
</dbReference>
<dbReference type="SUPFAM" id="SSF48557">
    <property type="entry name" value="L-aspartase-like"/>
    <property type="match status" value="1"/>
</dbReference>
<dbReference type="PROSITE" id="PS00163">
    <property type="entry name" value="FUMARATE_LYASES"/>
    <property type="match status" value="1"/>
</dbReference>
<comment type="function">
    <text evidence="1">Involved in the TCA cycle. Catalyzes the stereospecific interconversion of fumarate to L-malate.</text>
</comment>
<comment type="catalytic activity">
    <reaction evidence="1">
        <text>(S)-malate = fumarate + H2O</text>
        <dbReference type="Rhea" id="RHEA:12460"/>
        <dbReference type="ChEBI" id="CHEBI:15377"/>
        <dbReference type="ChEBI" id="CHEBI:15589"/>
        <dbReference type="ChEBI" id="CHEBI:29806"/>
        <dbReference type="EC" id="4.2.1.2"/>
    </reaction>
</comment>
<comment type="pathway">
    <text evidence="1">Carbohydrate metabolism; tricarboxylic acid cycle; (S)-malate from fumarate: step 1/1.</text>
</comment>
<comment type="subunit">
    <text evidence="1">Homotetramer.</text>
</comment>
<comment type="subcellular location">
    <subcellularLocation>
        <location evidence="1">Cytoplasm</location>
    </subcellularLocation>
</comment>
<comment type="miscellaneous">
    <text evidence="1">There are 2 substrate-binding sites: the catalytic A site, and the non-catalytic B site that may play a role in the transfer of substrate or product between the active site and the solvent. Alternatively, the B site may bind allosteric effectors.</text>
</comment>
<comment type="similarity">
    <text evidence="1">Belongs to the class-II fumarase/aspartase family. Fumarase subfamily.</text>
</comment>
<keyword id="KW-0963">Cytoplasm</keyword>
<keyword id="KW-0456">Lyase</keyword>
<keyword id="KW-1185">Reference proteome</keyword>
<keyword id="KW-0816">Tricarboxylic acid cycle</keyword>